<name>RS12_COLP3</name>
<accession>Q47UW1</accession>
<proteinExistence type="inferred from homology"/>
<comment type="function">
    <text evidence="2">With S4 and S5 plays an important role in translational accuracy.</text>
</comment>
<comment type="function">
    <text evidence="2">Interacts with and stabilizes bases of the 16S rRNA that are involved in tRNA selection in the A site and with the mRNA backbone. Located at the interface of the 30S and 50S subunits, it traverses the body of the 30S subunit contacting proteins on the other side and probably holding the rRNA structure together. The combined cluster of proteins S8, S12 and S17 appears to hold together the shoulder and platform of the 30S subunit.</text>
</comment>
<comment type="subunit">
    <text evidence="2">Part of the 30S ribosomal subunit. Contacts proteins S8 and S17. May interact with IF1 in the 30S initiation complex.</text>
</comment>
<comment type="similarity">
    <text evidence="2">Belongs to the universal ribosomal protein uS12 family.</text>
</comment>
<gene>
    <name evidence="2" type="primary">rpsL</name>
    <name type="ordered locus">CPS_4767</name>
</gene>
<keyword id="KW-0488">Methylation</keyword>
<keyword id="KW-0687">Ribonucleoprotein</keyword>
<keyword id="KW-0689">Ribosomal protein</keyword>
<keyword id="KW-0694">RNA-binding</keyword>
<keyword id="KW-0699">rRNA-binding</keyword>
<keyword id="KW-0820">tRNA-binding</keyword>
<protein>
    <recommendedName>
        <fullName evidence="2">Small ribosomal subunit protein uS12</fullName>
    </recommendedName>
    <alternativeName>
        <fullName evidence="4">30S ribosomal protein S12</fullName>
    </alternativeName>
</protein>
<sequence>MATINQLVRKPRVRQVTKSNVPALQACPQRRGVCTRVYTTTPKKPNSALRKVARVRLTNGFEVTSYIGGEGHNLQEHSVILIRGGRVKDLPGVRYHTVRGALDCSGVSDRRQGRSKYGAKRPKS</sequence>
<feature type="chain" id="PRO_0000226385" description="Small ribosomal subunit protein uS12">
    <location>
        <begin position="1"/>
        <end position="124"/>
    </location>
</feature>
<feature type="region of interest" description="Disordered" evidence="3">
    <location>
        <begin position="105"/>
        <end position="124"/>
    </location>
</feature>
<feature type="compositionally biased region" description="Basic residues" evidence="3">
    <location>
        <begin position="113"/>
        <end position="124"/>
    </location>
</feature>
<feature type="modified residue" description="3-methylthioaspartic acid" evidence="1">
    <location>
        <position position="89"/>
    </location>
</feature>
<organism>
    <name type="scientific">Colwellia psychrerythraea (strain 34H / ATCC BAA-681)</name>
    <name type="common">Vibrio psychroerythus</name>
    <dbReference type="NCBI Taxonomy" id="167879"/>
    <lineage>
        <taxon>Bacteria</taxon>
        <taxon>Pseudomonadati</taxon>
        <taxon>Pseudomonadota</taxon>
        <taxon>Gammaproteobacteria</taxon>
        <taxon>Alteromonadales</taxon>
        <taxon>Colwelliaceae</taxon>
        <taxon>Colwellia</taxon>
    </lineage>
</organism>
<evidence type="ECO:0000250" key="1"/>
<evidence type="ECO:0000255" key="2">
    <source>
        <dbReference type="HAMAP-Rule" id="MF_00403"/>
    </source>
</evidence>
<evidence type="ECO:0000256" key="3">
    <source>
        <dbReference type="SAM" id="MobiDB-lite"/>
    </source>
</evidence>
<evidence type="ECO:0000305" key="4"/>
<dbReference type="EMBL" id="CP000083">
    <property type="protein sequence ID" value="AAZ26362.1"/>
    <property type="molecule type" value="Genomic_DNA"/>
</dbReference>
<dbReference type="RefSeq" id="WP_011045492.1">
    <property type="nucleotide sequence ID" value="NC_003910.7"/>
</dbReference>
<dbReference type="SMR" id="Q47UW1"/>
<dbReference type="STRING" id="167879.CPS_4767"/>
<dbReference type="KEGG" id="cps:CPS_4767"/>
<dbReference type="eggNOG" id="COG0048">
    <property type="taxonomic scope" value="Bacteria"/>
</dbReference>
<dbReference type="HOGENOM" id="CLU_104295_1_2_6"/>
<dbReference type="Proteomes" id="UP000000547">
    <property type="component" value="Chromosome"/>
</dbReference>
<dbReference type="GO" id="GO:0015935">
    <property type="term" value="C:small ribosomal subunit"/>
    <property type="evidence" value="ECO:0007669"/>
    <property type="project" value="InterPro"/>
</dbReference>
<dbReference type="GO" id="GO:0019843">
    <property type="term" value="F:rRNA binding"/>
    <property type="evidence" value="ECO:0007669"/>
    <property type="project" value="UniProtKB-UniRule"/>
</dbReference>
<dbReference type="GO" id="GO:0003735">
    <property type="term" value="F:structural constituent of ribosome"/>
    <property type="evidence" value="ECO:0007669"/>
    <property type="project" value="InterPro"/>
</dbReference>
<dbReference type="GO" id="GO:0000049">
    <property type="term" value="F:tRNA binding"/>
    <property type="evidence" value="ECO:0007669"/>
    <property type="project" value="UniProtKB-UniRule"/>
</dbReference>
<dbReference type="GO" id="GO:0006412">
    <property type="term" value="P:translation"/>
    <property type="evidence" value="ECO:0007669"/>
    <property type="project" value="UniProtKB-UniRule"/>
</dbReference>
<dbReference type="CDD" id="cd03368">
    <property type="entry name" value="Ribosomal_S12"/>
    <property type="match status" value="1"/>
</dbReference>
<dbReference type="FunFam" id="2.40.50.140:FF:000001">
    <property type="entry name" value="30S ribosomal protein S12"/>
    <property type="match status" value="1"/>
</dbReference>
<dbReference type="Gene3D" id="2.40.50.140">
    <property type="entry name" value="Nucleic acid-binding proteins"/>
    <property type="match status" value="1"/>
</dbReference>
<dbReference type="HAMAP" id="MF_00403_B">
    <property type="entry name" value="Ribosomal_uS12_B"/>
    <property type="match status" value="1"/>
</dbReference>
<dbReference type="InterPro" id="IPR012340">
    <property type="entry name" value="NA-bd_OB-fold"/>
</dbReference>
<dbReference type="InterPro" id="IPR006032">
    <property type="entry name" value="Ribosomal_uS12"/>
</dbReference>
<dbReference type="InterPro" id="IPR005679">
    <property type="entry name" value="Ribosomal_uS12_bac"/>
</dbReference>
<dbReference type="NCBIfam" id="TIGR00981">
    <property type="entry name" value="rpsL_bact"/>
    <property type="match status" value="1"/>
</dbReference>
<dbReference type="PANTHER" id="PTHR11652">
    <property type="entry name" value="30S RIBOSOMAL PROTEIN S12 FAMILY MEMBER"/>
    <property type="match status" value="1"/>
</dbReference>
<dbReference type="Pfam" id="PF00164">
    <property type="entry name" value="Ribosom_S12_S23"/>
    <property type="match status" value="1"/>
</dbReference>
<dbReference type="PIRSF" id="PIRSF002133">
    <property type="entry name" value="Ribosomal_S12/S23"/>
    <property type="match status" value="1"/>
</dbReference>
<dbReference type="PRINTS" id="PR01034">
    <property type="entry name" value="RIBOSOMALS12"/>
</dbReference>
<dbReference type="SUPFAM" id="SSF50249">
    <property type="entry name" value="Nucleic acid-binding proteins"/>
    <property type="match status" value="1"/>
</dbReference>
<dbReference type="PROSITE" id="PS00055">
    <property type="entry name" value="RIBOSOMAL_S12"/>
    <property type="match status" value="1"/>
</dbReference>
<reference key="1">
    <citation type="journal article" date="2005" name="Proc. Natl. Acad. Sci. U.S.A.">
        <title>The psychrophilic lifestyle as revealed by the genome sequence of Colwellia psychrerythraea 34H through genomic and proteomic analyses.</title>
        <authorList>
            <person name="Methe B.A."/>
            <person name="Nelson K.E."/>
            <person name="Deming J.W."/>
            <person name="Momen B."/>
            <person name="Melamud E."/>
            <person name="Zhang X."/>
            <person name="Moult J."/>
            <person name="Madupu R."/>
            <person name="Nelson W.C."/>
            <person name="Dodson R.J."/>
            <person name="Brinkac L.M."/>
            <person name="Daugherty S.C."/>
            <person name="Durkin A.S."/>
            <person name="DeBoy R.T."/>
            <person name="Kolonay J.F."/>
            <person name="Sullivan S.A."/>
            <person name="Zhou L."/>
            <person name="Davidsen T.M."/>
            <person name="Wu M."/>
            <person name="Huston A.L."/>
            <person name="Lewis M."/>
            <person name="Weaver B."/>
            <person name="Weidman J.F."/>
            <person name="Khouri H."/>
            <person name="Utterback T.R."/>
            <person name="Feldblyum T.V."/>
            <person name="Fraser C.M."/>
        </authorList>
    </citation>
    <scope>NUCLEOTIDE SEQUENCE [LARGE SCALE GENOMIC DNA]</scope>
    <source>
        <strain>34H / ATCC BAA-681</strain>
    </source>
</reference>